<sequence>MPKASLISIASYVPEKILTNFDFEKMVDTSDEWIVKRTGIEQRHIATTEITSDLGTKAAELAIKRSGLEKSQIDAVICATISPDHLCMPSTACKIAANLGLNFGITAFDISAACTGFIYLLELANSLIVSGAKKNVLIIGAEKLSSIIDYTDRSTCILFGDGAGAAVISASEENEIIDIHTASDGRQAELLITPGCGSAFPASDETLKNRLNFIHMSGNEVFKIAVQTLSKSVIEILHANKMQSEDIDFFIPHQANIRIIDAVKNRLNFTDEQCVLTVAKYGNTSSASIPMAINDAYEDGRIKNGSVLLLDAFGGGFTWGSAILKFGGRNFSDL</sequence>
<proteinExistence type="inferred from homology"/>
<reference key="1">
    <citation type="submission" date="2007-10" db="EMBL/GenBank/DDBJ databases">
        <title>Genome sequence of Campylobacter concisus 13826 isolated from human feces.</title>
        <authorList>
            <person name="Fouts D.E."/>
            <person name="Mongodin E.F."/>
            <person name="Puiu D."/>
            <person name="Sebastian Y."/>
            <person name="Miller W.G."/>
            <person name="Mandrell R.E."/>
            <person name="On S."/>
            <person name="Nelson K.E."/>
        </authorList>
    </citation>
    <scope>NUCLEOTIDE SEQUENCE [LARGE SCALE GENOMIC DNA]</scope>
    <source>
        <strain>13826</strain>
    </source>
</reference>
<dbReference type="EC" id="2.3.1.180" evidence="1"/>
<dbReference type="EMBL" id="CP000792">
    <property type="protein sequence ID" value="EAT98235.1"/>
    <property type="molecule type" value="Genomic_DNA"/>
</dbReference>
<dbReference type="RefSeq" id="WP_012001306.1">
    <property type="nucleotide sequence ID" value="NC_009802.2"/>
</dbReference>
<dbReference type="SMR" id="A7ZC01"/>
<dbReference type="STRING" id="360104.CCC13826_0986"/>
<dbReference type="KEGG" id="cco:CCC13826_0986"/>
<dbReference type="eggNOG" id="COG0332">
    <property type="taxonomic scope" value="Bacteria"/>
</dbReference>
<dbReference type="HOGENOM" id="CLU_039592_3_1_7"/>
<dbReference type="OrthoDB" id="9815506at2"/>
<dbReference type="UniPathway" id="UPA00094"/>
<dbReference type="Proteomes" id="UP000001121">
    <property type="component" value="Chromosome"/>
</dbReference>
<dbReference type="GO" id="GO:0005737">
    <property type="term" value="C:cytoplasm"/>
    <property type="evidence" value="ECO:0007669"/>
    <property type="project" value="UniProtKB-SubCell"/>
</dbReference>
<dbReference type="GO" id="GO:0004315">
    <property type="term" value="F:3-oxoacyl-[acyl-carrier-protein] synthase activity"/>
    <property type="evidence" value="ECO:0007669"/>
    <property type="project" value="InterPro"/>
</dbReference>
<dbReference type="GO" id="GO:0033818">
    <property type="term" value="F:beta-ketoacyl-acyl-carrier-protein synthase III activity"/>
    <property type="evidence" value="ECO:0007669"/>
    <property type="project" value="UniProtKB-UniRule"/>
</dbReference>
<dbReference type="GO" id="GO:0006633">
    <property type="term" value="P:fatty acid biosynthetic process"/>
    <property type="evidence" value="ECO:0007669"/>
    <property type="project" value="UniProtKB-UniRule"/>
</dbReference>
<dbReference type="GO" id="GO:0044550">
    <property type="term" value="P:secondary metabolite biosynthetic process"/>
    <property type="evidence" value="ECO:0007669"/>
    <property type="project" value="TreeGrafter"/>
</dbReference>
<dbReference type="CDD" id="cd00830">
    <property type="entry name" value="KAS_III"/>
    <property type="match status" value="1"/>
</dbReference>
<dbReference type="FunFam" id="3.40.47.10:FF:000004">
    <property type="entry name" value="3-oxoacyl-[acyl-carrier-protein] synthase 3"/>
    <property type="match status" value="1"/>
</dbReference>
<dbReference type="Gene3D" id="3.40.47.10">
    <property type="match status" value="1"/>
</dbReference>
<dbReference type="HAMAP" id="MF_01815">
    <property type="entry name" value="FabH"/>
    <property type="match status" value="1"/>
</dbReference>
<dbReference type="InterPro" id="IPR013747">
    <property type="entry name" value="ACP_syn_III_C"/>
</dbReference>
<dbReference type="InterPro" id="IPR013751">
    <property type="entry name" value="ACP_syn_III_N"/>
</dbReference>
<dbReference type="InterPro" id="IPR004655">
    <property type="entry name" value="FabH"/>
</dbReference>
<dbReference type="InterPro" id="IPR016039">
    <property type="entry name" value="Thiolase-like"/>
</dbReference>
<dbReference type="NCBIfam" id="TIGR00747">
    <property type="entry name" value="fabH"/>
    <property type="match status" value="1"/>
</dbReference>
<dbReference type="NCBIfam" id="NF006829">
    <property type="entry name" value="PRK09352.1"/>
    <property type="match status" value="1"/>
</dbReference>
<dbReference type="PANTHER" id="PTHR34069">
    <property type="entry name" value="3-OXOACYL-[ACYL-CARRIER-PROTEIN] SYNTHASE 3"/>
    <property type="match status" value="1"/>
</dbReference>
<dbReference type="PANTHER" id="PTHR34069:SF2">
    <property type="entry name" value="BETA-KETOACYL-[ACYL-CARRIER-PROTEIN] SYNTHASE III"/>
    <property type="match status" value="1"/>
</dbReference>
<dbReference type="Pfam" id="PF08545">
    <property type="entry name" value="ACP_syn_III"/>
    <property type="match status" value="1"/>
</dbReference>
<dbReference type="Pfam" id="PF08541">
    <property type="entry name" value="ACP_syn_III_C"/>
    <property type="match status" value="1"/>
</dbReference>
<dbReference type="SUPFAM" id="SSF53901">
    <property type="entry name" value="Thiolase-like"/>
    <property type="match status" value="1"/>
</dbReference>
<name>FABH_CAMC1</name>
<evidence type="ECO:0000255" key="1">
    <source>
        <dbReference type="HAMAP-Rule" id="MF_01815"/>
    </source>
</evidence>
<gene>
    <name evidence="1" type="primary">fabH</name>
    <name type="ordered locus">Ccon26_04060</name>
    <name type="ORF">CCC13826_0986</name>
</gene>
<organism>
    <name type="scientific">Campylobacter concisus (strain 13826)</name>
    <dbReference type="NCBI Taxonomy" id="360104"/>
    <lineage>
        <taxon>Bacteria</taxon>
        <taxon>Pseudomonadati</taxon>
        <taxon>Campylobacterota</taxon>
        <taxon>Epsilonproteobacteria</taxon>
        <taxon>Campylobacterales</taxon>
        <taxon>Campylobacteraceae</taxon>
        <taxon>Campylobacter</taxon>
    </lineage>
</organism>
<protein>
    <recommendedName>
        <fullName evidence="1">Beta-ketoacyl-[acyl-carrier-protein] synthase III</fullName>
        <shortName evidence="1">Beta-ketoacyl-ACP synthase III</shortName>
        <shortName evidence="1">KAS III</shortName>
        <ecNumber evidence="1">2.3.1.180</ecNumber>
    </recommendedName>
    <alternativeName>
        <fullName evidence="1">3-oxoacyl-[acyl-carrier-protein] synthase 3</fullName>
    </alternativeName>
    <alternativeName>
        <fullName evidence="1">3-oxoacyl-[acyl-carrier-protein] synthase III</fullName>
    </alternativeName>
</protein>
<keyword id="KW-0012">Acyltransferase</keyword>
<keyword id="KW-0963">Cytoplasm</keyword>
<keyword id="KW-0275">Fatty acid biosynthesis</keyword>
<keyword id="KW-0276">Fatty acid metabolism</keyword>
<keyword id="KW-0444">Lipid biosynthesis</keyword>
<keyword id="KW-0443">Lipid metabolism</keyword>
<keyword id="KW-0511">Multifunctional enzyme</keyword>
<keyword id="KW-0808">Transferase</keyword>
<feature type="chain" id="PRO_1000056332" description="Beta-ketoacyl-[acyl-carrier-protein] synthase III">
    <location>
        <begin position="1"/>
        <end position="334"/>
    </location>
</feature>
<feature type="region of interest" description="ACP-binding" evidence="1">
    <location>
        <begin position="254"/>
        <end position="258"/>
    </location>
</feature>
<feature type="active site" evidence="1">
    <location>
        <position position="114"/>
    </location>
</feature>
<feature type="active site" evidence="1">
    <location>
        <position position="253"/>
    </location>
</feature>
<feature type="active site" evidence="1">
    <location>
        <position position="283"/>
    </location>
</feature>
<accession>A7ZC01</accession>
<comment type="function">
    <text evidence="1">Catalyzes the condensation reaction of fatty acid synthesis by the addition to an acyl acceptor of two carbons from malonyl-ACP. Catalyzes the first condensation reaction which initiates fatty acid synthesis and may therefore play a role in governing the total rate of fatty acid production. Possesses both acetoacetyl-ACP synthase and acetyl transacylase activities. Its substrate specificity determines the biosynthesis of branched-chain and/or straight-chain of fatty acids.</text>
</comment>
<comment type="catalytic activity">
    <reaction evidence="1">
        <text>malonyl-[ACP] + acetyl-CoA + H(+) = 3-oxobutanoyl-[ACP] + CO2 + CoA</text>
        <dbReference type="Rhea" id="RHEA:12080"/>
        <dbReference type="Rhea" id="RHEA-COMP:9623"/>
        <dbReference type="Rhea" id="RHEA-COMP:9625"/>
        <dbReference type="ChEBI" id="CHEBI:15378"/>
        <dbReference type="ChEBI" id="CHEBI:16526"/>
        <dbReference type="ChEBI" id="CHEBI:57287"/>
        <dbReference type="ChEBI" id="CHEBI:57288"/>
        <dbReference type="ChEBI" id="CHEBI:78449"/>
        <dbReference type="ChEBI" id="CHEBI:78450"/>
        <dbReference type="EC" id="2.3.1.180"/>
    </reaction>
</comment>
<comment type="pathway">
    <text evidence="1">Lipid metabolism; fatty acid biosynthesis.</text>
</comment>
<comment type="subunit">
    <text evidence="1">Homodimer.</text>
</comment>
<comment type="subcellular location">
    <subcellularLocation>
        <location evidence="1">Cytoplasm</location>
    </subcellularLocation>
</comment>
<comment type="domain">
    <text evidence="1">The last Arg residue of the ACP-binding site is essential for the weak association between ACP/AcpP and FabH.</text>
</comment>
<comment type="similarity">
    <text evidence="1">Belongs to the thiolase-like superfamily. FabH family.</text>
</comment>